<proteinExistence type="inferred from homology"/>
<dbReference type="EC" id="1.1.1.85"/>
<dbReference type="EMBL" id="Y09578">
    <property type="protein sequence ID" value="CAA70767.1"/>
    <property type="molecule type" value="Genomic_DNA"/>
</dbReference>
<dbReference type="EMBL" id="BA000036">
    <property type="protein sequence ID" value="BAB98679.1"/>
    <property type="molecule type" value="Genomic_DNA"/>
</dbReference>
<dbReference type="EMBL" id="BX927151">
    <property type="protein sequence ID" value="CAF19988.1"/>
    <property type="molecule type" value="Genomic_DNA"/>
</dbReference>
<dbReference type="RefSeq" id="NP_600508.1">
    <property type="nucleotide sequence ID" value="NC_003450.3"/>
</dbReference>
<dbReference type="RefSeq" id="WP_011014258.1">
    <property type="nucleotide sequence ID" value="NC_006958.1"/>
</dbReference>
<dbReference type="SMR" id="P94631"/>
<dbReference type="STRING" id="196627.cg1453"/>
<dbReference type="KEGG" id="cgb:cg1453"/>
<dbReference type="KEGG" id="cgl:Cgl1286"/>
<dbReference type="PATRIC" id="fig|196627.13.peg.1263"/>
<dbReference type="eggNOG" id="COG0473">
    <property type="taxonomic scope" value="Bacteria"/>
</dbReference>
<dbReference type="HOGENOM" id="CLU_031953_0_1_11"/>
<dbReference type="OrthoDB" id="5289857at2"/>
<dbReference type="BioCyc" id="CORYNE:G18NG-10859-MONOMER"/>
<dbReference type="UniPathway" id="UPA00048">
    <property type="reaction ID" value="UER00072"/>
</dbReference>
<dbReference type="Proteomes" id="UP000000582">
    <property type="component" value="Chromosome"/>
</dbReference>
<dbReference type="Proteomes" id="UP000001009">
    <property type="component" value="Chromosome"/>
</dbReference>
<dbReference type="GO" id="GO:0005737">
    <property type="term" value="C:cytoplasm"/>
    <property type="evidence" value="ECO:0007669"/>
    <property type="project" value="UniProtKB-SubCell"/>
</dbReference>
<dbReference type="GO" id="GO:0003862">
    <property type="term" value="F:3-isopropylmalate dehydrogenase activity"/>
    <property type="evidence" value="ECO:0007669"/>
    <property type="project" value="UniProtKB-UniRule"/>
</dbReference>
<dbReference type="GO" id="GO:0000287">
    <property type="term" value="F:magnesium ion binding"/>
    <property type="evidence" value="ECO:0007669"/>
    <property type="project" value="InterPro"/>
</dbReference>
<dbReference type="GO" id="GO:0051287">
    <property type="term" value="F:NAD binding"/>
    <property type="evidence" value="ECO:0007669"/>
    <property type="project" value="InterPro"/>
</dbReference>
<dbReference type="GO" id="GO:0009098">
    <property type="term" value="P:L-leucine biosynthetic process"/>
    <property type="evidence" value="ECO:0007669"/>
    <property type="project" value="UniProtKB-UniRule"/>
</dbReference>
<dbReference type="Gene3D" id="3.40.718.10">
    <property type="entry name" value="Isopropylmalate Dehydrogenase"/>
    <property type="match status" value="1"/>
</dbReference>
<dbReference type="HAMAP" id="MF_01035">
    <property type="entry name" value="LeuB_type2"/>
    <property type="match status" value="1"/>
</dbReference>
<dbReference type="InterPro" id="IPR050501">
    <property type="entry name" value="ICDH/IPMDH"/>
</dbReference>
<dbReference type="InterPro" id="IPR019818">
    <property type="entry name" value="IsoCit/isopropylmalate_DH_CS"/>
</dbReference>
<dbReference type="InterPro" id="IPR024084">
    <property type="entry name" value="IsoPropMal-DH-like_dom"/>
</dbReference>
<dbReference type="InterPro" id="IPR023698">
    <property type="entry name" value="LeuB_actb"/>
</dbReference>
<dbReference type="NCBIfam" id="NF002898">
    <property type="entry name" value="PRK03437.1"/>
    <property type="match status" value="1"/>
</dbReference>
<dbReference type="PANTHER" id="PTHR43275">
    <property type="entry name" value="D-MALATE DEHYDROGENASE [DECARBOXYLATING]"/>
    <property type="match status" value="1"/>
</dbReference>
<dbReference type="PANTHER" id="PTHR43275:SF1">
    <property type="entry name" value="D-MALATE DEHYDROGENASE [DECARBOXYLATING]"/>
    <property type="match status" value="1"/>
</dbReference>
<dbReference type="Pfam" id="PF00180">
    <property type="entry name" value="Iso_dh"/>
    <property type="match status" value="1"/>
</dbReference>
<dbReference type="SMART" id="SM01329">
    <property type="entry name" value="Iso_dh"/>
    <property type="match status" value="1"/>
</dbReference>
<dbReference type="SUPFAM" id="SSF53659">
    <property type="entry name" value="Isocitrate/Isopropylmalate dehydrogenase-like"/>
    <property type="match status" value="1"/>
</dbReference>
<dbReference type="PROSITE" id="PS00470">
    <property type="entry name" value="IDH_IMDH"/>
    <property type="match status" value="1"/>
</dbReference>
<name>LEU3_CORGL</name>
<protein>
    <recommendedName>
        <fullName>3-isopropylmalate dehydrogenase</fullName>
        <ecNumber>1.1.1.85</ecNumber>
    </recommendedName>
    <alternativeName>
        <fullName>3-IPM-DH</fullName>
    </alternativeName>
    <alternativeName>
        <fullName>Beta-IPM dehydrogenase</fullName>
        <shortName>IMDH</shortName>
    </alternativeName>
</protein>
<sequence length="340" mass="36145">MKLAVIGGDGIGPEVTAEALKVLNAVRDDIETTDYDLGARRYLKNGELLTDEDLASLREHDAILLGAIGAPGSVPPGILERGLLLKMRFALDHHVNLRPSKLYDGVESPLRNPGKIDFVVVREGTEGAYTGNGGAIRVGTPHEIANETSVNTRYGAERVIRYAFELAQSRRKKLTLVHKTNVLVHGGGLWQRTVDEVAKEYPEVAVDYNHIDAATIYLVTDPSRFDVIVTDNLFGDILTDEAGAVSGGIGLAASGNIDATGTNPSMFEPVHGSAPDIAGQGIADPTAAILSAAMLLRHLGDEDNAVRIETAIAADVAGRDNSQPISTTEVGDRIVKALQS</sequence>
<gene>
    <name type="primary">leuB</name>
    <name type="ordered locus">Cgl1286</name>
    <name type="ordered locus">cg1453</name>
</gene>
<accession>P94631</accession>
<organism>
    <name type="scientific">Corynebacterium glutamicum (strain ATCC 13032 / DSM 20300 / JCM 1318 / BCRC 11384 / CCUG 27702 / LMG 3730 / NBRC 12168 / NCIMB 10025 / NRRL B-2784 / 534)</name>
    <dbReference type="NCBI Taxonomy" id="196627"/>
    <lineage>
        <taxon>Bacteria</taxon>
        <taxon>Bacillati</taxon>
        <taxon>Actinomycetota</taxon>
        <taxon>Actinomycetes</taxon>
        <taxon>Mycobacteriales</taxon>
        <taxon>Corynebacteriaceae</taxon>
        <taxon>Corynebacterium</taxon>
    </lineage>
</organism>
<feature type="chain" id="PRO_0000083797" description="3-isopropylmalate dehydrogenase">
    <location>
        <begin position="1"/>
        <end position="340"/>
    </location>
</feature>
<feature type="binding site" evidence="1">
    <location>
        <position position="88"/>
    </location>
    <ligand>
        <name>substrate</name>
    </ligand>
</feature>
<feature type="binding site" evidence="1">
    <location>
        <position position="98"/>
    </location>
    <ligand>
        <name>substrate</name>
    </ligand>
</feature>
<feature type="binding site" evidence="1">
    <location>
        <position position="122"/>
    </location>
    <ligand>
        <name>substrate</name>
    </ligand>
</feature>
<feature type="binding site" evidence="1">
    <location>
        <position position="212"/>
    </location>
    <ligand>
        <name>Mg(2+)</name>
        <dbReference type="ChEBI" id="CHEBI:18420"/>
    </ligand>
</feature>
<feature type="binding site" evidence="1">
    <location>
        <position position="212"/>
    </location>
    <ligand>
        <name>substrate</name>
    </ligand>
</feature>
<feature type="binding site" evidence="1">
    <location>
        <position position="236"/>
    </location>
    <ligand>
        <name>Mg(2+)</name>
        <dbReference type="ChEBI" id="CHEBI:18420"/>
    </ligand>
</feature>
<feature type="binding site" evidence="1">
    <location>
        <position position="240"/>
    </location>
    <ligand>
        <name>Mg(2+)</name>
        <dbReference type="ChEBI" id="CHEBI:18420"/>
    </ligand>
</feature>
<feature type="binding site" evidence="1">
    <location>
        <begin position="272"/>
        <end position="284"/>
    </location>
    <ligand>
        <name>NAD(+)</name>
        <dbReference type="ChEBI" id="CHEBI:57540"/>
    </ligand>
</feature>
<feature type="site" description="Important for catalysis" evidence="1">
    <location>
        <position position="129"/>
    </location>
</feature>
<feature type="site" description="Important for catalysis" evidence="1">
    <location>
        <position position="179"/>
    </location>
</feature>
<comment type="function">
    <text evidence="1">Catalyzes the oxidation of 3-carboxy-2-hydroxy-4-methylpentanoate (3-isopropylmalate) to 3-carboxy-4-methyl-2-oxopentanoate. The product decarboxylates to 4-methyl-2 oxopentanoate (By similarity).</text>
</comment>
<comment type="catalytic activity">
    <reaction>
        <text>(2R,3S)-3-isopropylmalate + NAD(+) = 4-methyl-2-oxopentanoate + CO2 + NADH</text>
        <dbReference type="Rhea" id="RHEA:32271"/>
        <dbReference type="ChEBI" id="CHEBI:16526"/>
        <dbReference type="ChEBI" id="CHEBI:17865"/>
        <dbReference type="ChEBI" id="CHEBI:35121"/>
        <dbReference type="ChEBI" id="CHEBI:57540"/>
        <dbReference type="ChEBI" id="CHEBI:57945"/>
        <dbReference type="EC" id="1.1.1.85"/>
    </reaction>
</comment>
<comment type="cofactor">
    <cofactor evidence="1">
        <name>Mg(2+)</name>
        <dbReference type="ChEBI" id="CHEBI:18420"/>
    </cofactor>
    <cofactor evidence="1">
        <name>Mn(2+)</name>
        <dbReference type="ChEBI" id="CHEBI:29035"/>
    </cofactor>
    <text evidence="1">Binds 1 Mg(2+) or Mn(2+) ion per subunit.</text>
</comment>
<comment type="pathway">
    <text>Amino-acid biosynthesis; L-leucine biosynthesis; L-leucine from 3-methyl-2-oxobutanoate: step 3/4.</text>
</comment>
<comment type="subunit">
    <text evidence="1">Homodimer.</text>
</comment>
<comment type="subcellular location">
    <subcellularLocation>
        <location evidence="1">Cytoplasm</location>
    </subcellularLocation>
</comment>
<comment type="similarity">
    <text evidence="2">Belongs to the isocitrate and isopropylmalate dehydrogenases family. LeuB type 2 subfamily.</text>
</comment>
<evidence type="ECO:0000250" key="1"/>
<evidence type="ECO:0000305" key="2"/>
<reference key="1">
    <citation type="journal article" date="1998" name="Appl. Microbiol. Biotechnol.">
        <title>Analysis of the leuB gene from Corynebacterium glutamicum.</title>
        <authorList>
            <person name="Patek M."/>
            <person name="Hochmannova J."/>
            <person name="Jelinkova M."/>
            <person name="Nesvera J."/>
            <person name="Eggeling L."/>
        </authorList>
    </citation>
    <scope>NUCLEOTIDE SEQUENCE [GENOMIC DNA]</scope>
    <source>
        <strain>ATCC 13032 / DSM 20300 / JCM 1318 / BCRC 11384 / CCUG 27702 / LMG 3730 / NBRC 12168 / NCIMB 10025 / NRRL B-2784 / 534</strain>
    </source>
</reference>
<reference key="2">
    <citation type="journal article" date="2003" name="Appl. Microbiol. Biotechnol.">
        <title>The Corynebacterium glutamicum genome: features and impacts on biotechnological processes.</title>
        <authorList>
            <person name="Ikeda M."/>
            <person name="Nakagawa S."/>
        </authorList>
    </citation>
    <scope>NUCLEOTIDE SEQUENCE [LARGE SCALE GENOMIC DNA]</scope>
    <source>
        <strain>ATCC 13032 / DSM 20300 / JCM 1318 / BCRC 11384 / CCUG 27702 / LMG 3730 / NBRC 12168 / NCIMB 10025 / NRRL B-2784 / 534</strain>
    </source>
</reference>
<reference key="3">
    <citation type="journal article" date="2003" name="J. Biotechnol.">
        <title>The complete Corynebacterium glutamicum ATCC 13032 genome sequence and its impact on the production of L-aspartate-derived amino acids and vitamins.</title>
        <authorList>
            <person name="Kalinowski J."/>
            <person name="Bathe B."/>
            <person name="Bartels D."/>
            <person name="Bischoff N."/>
            <person name="Bott M."/>
            <person name="Burkovski A."/>
            <person name="Dusch N."/>
            <person name="Eggeling L."/>
            <person name="Eikmanns B.J."/>
            <person name="Gaigalat L."/>
            <person name="Goesmann A."/>
            <person name="Hartmann M."/>
            <person name="Huthmacher K."/>
            <person name="Kraemer R."/>
            <person name="Linke B."/>
            <person name="McHardy A.C."/>
            <person name="Meyer F."/>
            <person name="Moeckel B."/>
            <person name="Pfefferle W."/>
            <person name="Puehler A."/>
            <person name="Rey D.A."/>
            <person name="Rueckert C."/>
            <person name="Rupp O."/>
            <person name="Sahm H."/>
            <person name="Wendisch V.F."/>
            <person name="Wiegraebe I."/>
            <person name="Tauch A."/>
        </authorList>
    </citation>
    <scope>NUCLEOTIDE SEQUENCE [LARGE SCALE GENOMIC DNA]</scope>
    <source>
        <strain>ATCC 13032 / DSM 20300 / JCM 1318 / BCRC 11384 / CCUG 27702 / LMG 3730 / NBRC 12168 / NCIMB 10025 / NRRL B-2784 / 534</strain>
    </source>
</reference>
<keyword id="KW-0028">Amino-acid biosynthesis</keyword>
<keyword id="KW-0100">Branched-chain amino acid biosynthesis</keyword>
<keyword id="KW-0963">Cytoplasm</keyword>
<keyword id="KW-0432">Leucine biosynthesis</keyword>
<keyword id="KW-0460">Magnesium</keyword>
<keyword id="KW-0464">Manganese</keyword>
<keyword id="KW-0479">Metal-binding</keyword>
<keyword id="KW-0520">NAD</keyword>
<keyword id="KW-0560">Oxidoreductase</keyword>
<keyword id="KW-1185">Reference proteome</keyword>